<gene>
    <name evidence="1" type="primary">psbF</name>
</gene>
<evidence type="ECO:0000255" key="1">
    <source>
        <dbReference type="HAMAP-Rule" id="MF_00643"/>
    </source>
</evidence>
<proteinExistence type="inferred from homology"/>
<dbReference type="EMBL" id="AY835431">
    <property type="protein sequence ID" value="AAV80668.1"/>
    <property type="molecule type" value="Genomic_DNA"/>
</dbReference>
<dbReference type="RefSeq" id="YP_636246.1">
    <property type="nucleotide sequence ID" value="NC_008114.1"/>
</dbReference>
<dbReference type="SMR" id="Q3ZJ21"/>
<dbReference type="GeneID" id="4108712"/>
<dbReference type="GO" id="GO:0009535">
    <property type="term" value="C:chloroplast thylakoid membrane"/>
    <property type="evidence" value="ECO:0007669"/>
    <property type="project" value="UniProtKB-SubCell"/>
</dbReference>
<dbReference type="GO" id="GO:0009539">
    <property type="term" value="C:photosystem II reaction center"/>
    <property type="evidence" value="ECO:0007669"/>
    <property type="project" value="InterPro"/>
</dbReference>
<dbReference type="GO" id="GO:0009055">
    <property type="term" value="F:electron transfer activity"/>
    <property type="evidence" value="ECO:0007669"/>
    <property type="project" value="UniProtKB-UniRule"/>
</dbReference>
<dbReference type="GO" id="GO:0020037">
    <property type="term" value="F:heme binding"/>
    <property type="evidence" value="ECO:0007669"/>
    <property type="project" value="InterPro"/>
</dbReference>
<dbReference type="GO" id="GO:0005506">
    <property type="term" value="F:iron ion binding"/>
    <property type="evidence" value="ECO:0007669"/>
    <property type="project" value="UniProtKB-UniRule"/>
</dbReference>
<dbReference type="GO" id="GO:0009767">
    <property type="term" value="P:photosynthetic electron transport chain"/>
    <property type="evidence" value="ECO:0007669"/>
    <property type="project" value="InterPro"/>
</dbReference>
<dbReference type="HAMAP" id="MF_00643">
    <property type="entry name" value="PSII_PsbF"/>
    <property type="match status" value="1"/>
</dbReference>
<dbReference type="InterPro" id="IPR006241">
    <property type="entry name" value="PSII_cyt_b559_bsu"/>
</dbReference>
<dbReference type="InterPro" id="IPR006216">
    <property type="entry name" value="PSII_cyt_b559_CS"/>
</dbReference>
<dbReference type="InterPro" id="IPR013081">
    <property type="entry name" value="PSII_cyt_b559_N"/>
</dbReference>
<dbReference type="NCBIfam" id="TIGR01333">
    <property type="entry name" value="cyt_b559_beta"/>
    <property type="match status" value="1"/>
</dbReference>
<dbReference type="Pfam" id="PF00283">
    <property type="entry name" value="Cytochrom_B559"/>
    <property type="match status" value="1"/>
</dbReference>
<dbReference type="PIRSF" id="PIRSF000037">
    <property type="entry name" value="PsbF"/>
    <property type="match status" value="1"/>
</dbReference>
<dbReference type="SUPFAM" id="SSF161045">
    <property type="entry name" value="Cytochrome b559 subunits"/>
    <property type="match status" value="1"/>
</dbReference>
<dbReference type="PROSITE" id="PS00537">
    <property type="entry name" value="CYTOCHROME_B559"/>
    <property type="match status" value="1"/>
</dbReference>
<protein>
    <recommendedName>
        <fullName evidence="1">Cytochrome b559 subunit beta</fullName>
    </recommendedName>
    <alternativeName>
        <fullName evidence="1">PSII reaction center subunit VI</fullName>
    </alternativeName>
</protein>
<organism>
    <name type="scientific">Tupiella akineta</name>
    <name type="common">Green alga</name>
    <name type="synonym">Pseudendoclonium akinetum</name>
    <dbReference type="NCBI Taxonomy" id="160070"/>
    <lineage>
        <taxon>Eukaryota</taxon>
        <taxon>Viridiplantae</taxon>
        <taxon>Chlorophyta</taxon>
        <taxon>Ulvophyceae</taxon>
        <taxon>OUU clade</taxon>
        <taxon>Ulotrichales</taxon>
        <taxon>Tupiellaceae</taxon>
        <taxon>Tupiella</taxon>
    </lineage>
</organism>
<reference key="1">
    <citation type="journal article" date="2005" name="Mol. Biol. Evol.">
        <title>The chloroplast genome sequence of the green alga Pseudendoclonium akinetum (Ulvophyceae) reveals unusual structural features and new insights into the branching order of chlorophyte lineages.</title>
        <authorList>
            <person name="Pombert J.-F."/>
            <person name="Otis C."/>
            <person name="Lemieux C."/>
            <person name="Turmel M."/>
        </authorList>
    </citation>
    <scope>NUCLEOTIDE SEQUENCE [LARGE SCALE GENOMIC DNA]</scope>
    <source>
        <strain>UTEX 1912</strain>
    </source>
</reference>
<name>PSBF_TUPAK</name>
<keyword id="KW-0150">Chloroplast</keyword>
<keyword id="KW-0249">Electron transport</keyword>
<keyword id="KW-0349">Heme</keyword>
<keyword id="KW-0408">Iron</keyword>
<keyword id="KW-0472">Membrane</keyword>
<keyword id="KW-0479">Metal-binding</keyword>
<keyword id="KW-0602">Photosynthesis</keyword>
<keyword id="KW-0604">Photosystem II</keyword>
<keyword id="KW-0934">Plastid</keyword>
<keyword id="KW-0793">Thylakoid</keyword>
<keyword id="KW-0812">Transmembrane</keyword>
<keyword id="KW-1133">Transmembrane helix</keyword>
<keyword id="KW-0813">Transport</keyword>
<accession>Q3ZJ21</accession>
<comment type="function">
    <text evidence="1">This b-type cytochrome is tightly associated with the reaction center of photosystem II (PSII). PSII is a light-driven water:plastoquinone oxidoreductase that uses light energy to abstract electrons from H(2)O, generating O(2) and a proton gradient subsequently used for ATP formation. It consists of a core antenna complex that captures photons, and an electron transfer chain that converts photonic excitation into a charge separation.</text>
</comment>
<comment type="cofactor">
    <cofactor evidence="1">
        <name>heme b</name>
        <dbReference type="ChEBI" id="CHEBI:60344"/>
    </cofactor>
    <text evidence="1">With its partner (PsbE) binds heme. PSII binds additional chlorophylls, carotenoids and specific lipids.</text>
</comment>
<comment type="subunit">
    <text evidence="1">Heterodimer of an alpha subunit and a beta subunit. PSII is composed of 1 copy each of membrane proteins PsbA, PsbB, PsbC, PsbD, PsbE, PsbF, PsbH, PsbI, PsbJ, PsbK, PsbL, PsbM, PsbT, PsbX, PsbY, PsbZ, Psb30/Ycf12, at least 3 peripheral proteins of the oxygen-evolving complex and a large number of cofactors. It forms dimeric complexes.</text>
</comment>
<comment type="subcellular location">
    <subcellularLocation>
        <location evidence="1">Plastid</location>
        <location evidence="1">Chloroplast thylakoid membrane</location>
        <topology evidence="1">Single-pass membrane protein</topology>
    </subcellularLocation>
</comment>
<comment type="similarity">
    <text evidence="1">Belongs to the PsbE/PsbF family.</text>
</comment>
<sequence>MTTKKSSYTYPIFTVRWLSIHALAVPTVFFLGAITAMQFIQR</sequence>
<geneLocation type="chloroplast"/>
<feature type="chain" id="PRO_0000233648" description="Cytochrome b559 subunit beta">
    <location>
        <begin position="1"/>
        <end position="42"/>
    </location>
</feature>
<feature type="transmembrane region" description="Helical" evidence="1">
    <location>
        <begin position="17"/>
        <end position="33"/>
    </location>
</feature>
<feature type="binding site" description="axial binding residue" evidence="1">
    <location>
        <position position="21"/>
    </location>
    <ligand>
        <name>heme</name>
        <dbReference type="ChEBI" id="CHEBI:30413"/>
        <note>ligand shared with alpha subunit</note>
    </ligand>
    <ligandPart>
        <name>Fe</name>
        <dbReference type="ChEBI" id="CHEBI:18248"/>
    </ligandPart>
</feature>